<accession>Q3BCU0</accession>
<keyword id="KW-1003">Cell membrane</keyword>
<keyword id="KW-1015">Disulfide bond</keyword>
<keyword id="KW-0297">G-protein coupled receptor</keyword>
<keyword id="KW-0325">Glycoprotein</keyword>
<keyword id="KW-0449">Lipoprotein</keyword>
<keyword id="KW-0472">Membrane</keyword>
<keyword id="KW-0564">Palmitate</keyword>
<keyword id="KW-0675">Receptor</keyword>
<keyword id="KW-1185">Reference proteome</keyword>
<keyword id="KW-0807">Transducer</keyword>
<keyword id="KW-0812">Transmembrane</keyword>
<keyword id="KW-1133">Transmembrane helix</keyword>
<evidence type="ECO:0000250" key="1">
    <source>
        <dbReference type="UniProtKB" id="P46663"/>
    </source>
</evidence>
<evidence type="ECO:0000255" key="2"/>
<evidence type="ECO:0000255" key="3">
    <source>
        <dbReference type="PROSITE-ProRule" id="PRU00521"/>
    </source>
</evidence>
<proteinExistence type="evidence at transcript level"/>
<gene>
    <name type="primary">BDKRB1</name>
</gene>
<comment type="function">
    <text evidence="1">This is a receptor for bradykinin. Could be a factor in chronic pain and inflammation.</text>
</comment>
<comment type="subcellular location">
    <subcellularLocation>
        <location evidence="1">Cell membrane</location>
        <topology evidence="2">Multi-pass membrane protein</topology>
    </subcellularLocation>
</comment>
<comment type="similarity">
    <text evidence="3">Belongs to the G-protein coupled receptor 1 family. Bradykinin receptor subfamily. BDKRB1 sub-subfamily.</text>
</comment>
<feature type="chain" id="PRO_0000069182" description="B1 bradykinin receptor">
    <location>
        <begin position="1"/>
        <end position="352"/>
    </location>
</feature>
<feature type="topological domain" description="Extracellular" evidence="2">
    <location>
        <begin position="1"/>
        <end position="41"/>
    </location>
</feature>
<feature type="transmembrane region" description="Helical; Name=1" evidence="2">
    <location>
        <begin position="42"/>
        <end position="62"/>
    </location>
</feature>
<feature type="topological domain" description="Cytoplasmic" evidence="2">
    <location>
        <begin position="63"/>
        <end position="72"/>
    </location>
</feature>
<feature type="transmembrane region" description="Helical; Name=2" evidence="2">
    <location>
        <begin position="73"/>
        <end position="93"/>
    </location>
</feature>
<feature type="topological domain" description="Extracellular" evidence="2">
    <location>
        <begin position="94"/>
        <end position="110"/>
    </location>
</feature>
<feature type="transmembrane region" description="Helical; Name=3" evidence="2">
    <location>
        <begin position="111"/>
        <end position="131"/>
    </location>
</feature>
<feature type="topological domain" description="Cytoplasmic" evidence="2">
    <location>
        <begin position="132"/>
        <end position="153"/>
    </location>
</feature>
<feature type="transmembrane region" description="Helical; Name=4" evidence="2">
    <location>
        <begin position="154"/>
        <end position="174"/>
    </location>
</feature>
<feature type="topological domain" description="Extracellular" evidence="2">
    <location>
        <begin position="175"/>
        <end position="206"/>
    </location>
</feature>
<feature type="transmembrane region" description="Helical; Name=5" evidence="2">
    <location>
        <begin position="207"/>
        <end position="227"/>
    </location>
</feature>
<feature type="topological domain" description="Cytoplasmic" evidence="2">
    <location>
        <begin position="228"/>
        <end position="250"/>
    </location>
</feature>
<feature type="transmembrane region" description="Helical; Name=6" evidence="2">
    <location>
        <begin position="251"/>
        <end position="271"/>
    </location>
</feature>
<feature type="topological domain" description="Extracellular" evidence="2">
    <location>
        <begin position="272"/>
        <end position="294"/>
    </location>
</feature>
<feature type="transmembrane region" description="Helical; Name=7" evidence="2">
    <location>
        <begin position="295"/>
        <end position="315"/>
    </location>
</feature>
<feature type="topological domain" description="Cytoplasmic" evidence="2">
    <location>
        <begin position="316"/>
        <end position="352"/>
    </location>
</feature>
<feature type="lipid moiety-binding region" description="S-palmitoyl cysteine" evidence="2">
    <location>
        <position position="329"/>
    </location>
</feature>
<feature type="glycosylation site" description="N-linked (GlcNAc...) asparagine" evidence="2">
    <location>
        <position position="13"/>
    </location>
</feature>
<feature type="glycosylation site" description="N-linked (GlcNAc...) asparagine" evidence="2">
    <location>
        <position position="21"/>
    </location>
</feature>
<feature type="glycosylation site" description="N-linked (GlcNAc...) asparagine" evidence="2">
    <location>
        <position position="184"/>
    </location>
</feature>
<feature type="disulfide bond" evidence="3">
    <location>
        <begin position="109"/>
        <end position="188"/>
    </location>
</feature>
<organism>
    <name type="scientific">Macaca fascicularis</name>
    <name type="common">Crab-eating macaque</name>
    <name type="synonym">Cynomolgus monkey</name>
    <dbReference type="NCBI Taxonomy" id="9541"/>
    <lineage>
        <taxon>Eukaryota</taxon>
        <taxon>Metazoa</taxon>
        <taxon>Chordata</taxon>
        <taxon>Craniata</taxon>
        <taxon>Vertebrata</taxon>
        <taxon>Euteleostomi</taxon>
        <taxon>Mammalia</taxon>
        <taxon>Eutheria</taxon>
        <taxon>Euarchontoglires</taxon>
        <taxon>Primates</taxon>
        <taxon>Haplorrhini</taxon>
        <taxon>Catarrhini</taxon>
        <taxon>Cercopithecidae</taxon>
        <taxon>Cercopithecinae</taxon>
        <taxon>Macaca</taxon>
    </lineage>
</organism>
<sequence>MASWPPLQLQSSNQSQLFPQNATACDNAPEAWDLLHRVLPTFIISICSFGLLGNLFVLLVFLLPRRRLNVAEIYLANLAASDLVFVLGLPFWAENIWNQFNWPFGALLCRVINGIIKANLFISIFLVVAISQDRYCVLVHPMASRRRQRRRQARVTCVLIWVVGGLLSIPTFLLRSIQAVPDLNITACILLLPHEAWHFARIVELNILAFLLPLAAIIFFNYHILASLRGREEVSRTRCGGSKDSKTTALILTLVVAFLVCWAPYHFFAFLEFLFQVQAVRGCFWEDFIDLGLQLANFLAFTNSSLNPVIYVFAGRLFRTKVWELYKQCTPKSLAPISSSHRKEIFQLFWRN</sequence>
<reference key="1">
    <citation type="submission" date="2004-10" db="EMBL/GenBank/DDBJ databases">
        <title>Cynomolgus monkey (Macaca fascicularis) bradykinin receptor B1 gene.</title>
        <authorList>
            <person name="Coombs S."/>
            <person name="Cortright D."/>
            <person name="Peck A."/>
        </authorList>
    </citation>
    <scope>NUCLEOTIDE SEQUENCE [MRNA]</scope>
    <source>
        <tissue>Lung</tissue>
    </source>
</reference>
<protein>
    <recommendedName>
        <fullName>B1 bradykinin receptor</fullName>
        <shortName>B1R</shortName>
        <shortName>BK-1 receptor</shortName>
    </recommendedName>
</protein>
<dbReference type="EMBL" id="AY788905">
    <property type="protein sequence ID" value="AAX14712.1"/>
    <property type="molecule type" value="mRNA"/>
</dbReference>
<dbReference type="RefSeq" id="NP_001271812.1">
    <property type="nucleotide sequence ID" value="NM_001284883.1"/>
</dbReference>
<dbReference type="RefSeq" id="XP_015308746.1">
    <property type="nucleotide sequence ID" value="XM_015453260.1"/>
</dbReference>
<dbReference type="SMR" id="Q3BCU0"/>
<dbReference type="BindingDB" id="Q3BCU0"/>
<dbReference type="ChEMBL" id="CHEMBL5155"/>
<dbReference type="GlyCosmos" id="Q3BCU0">
    <property type="glycosylation" value="3 sites, No reported glycans"/>
</dbReference>
<dbReference type="GeneID" id="102123453"/>
<dbReference type="CTD" id="623"/>
<dbReference type="PRO" id="PR:Q3BCU0"/>
<dbReference type="Proteomes" id="UP000233100">
    <property type="component" value="Unplaced"/>
</dbReference>
<dbReference type="GO" id="GO:0009897">
    <property type="term" value="C:external side of plasma membrane"/>
    <property type="evidence" value="ECO:0007669"/>
    <property type="project" value="TreeGrafter"/>
</dbReference>
<dbReference type="GO" id="GO:0004947">
    <property type="term" value="F:bradykinin receptor activity"/>
    <property type="evidence" value="ECO:0007669"/>
    <property type="project" value="InterPro"/>
</dbReference>
<dbReference type="GO" id="GO:0019957">
    <property type="term" value="F:C-C chemokine binding"/>
    <property type="evidence" value="ECO:0007669"/>
    <property type="project" value="TreeGrafter"/>
</dbReference>
<dbReference type="GO" id="GO:0016493">
    <property type="term" value="F:C-C chemokine receptor activity"/>
    <property type="evidence" value="ECO:0007669"/>
    <property type="project" value="TreeGrafter"/>
</dbReference>
<dbReference type="GO" id="GO:0019722">
    <property type="term" value="P:calcium-mediated signaling"/>
    <property type="evidence" value="ECO:0007669"/>
    <property type="project" value="TreeGrafter"/>
</dbReference>
<dbReference type="GO" id="GO:0060326">
    <property type="term" value="P:cell chemotaxis"/>
    <property type="evidence" value="ECO:0007669"/>
    <property type="project" value="TreeGrafter"/>
</dbReference>
<dbReference type="GO" id="GO:0006955">
    <property type="term" value="P:immune response"/>
    <property type="evidence" value="ECO:0007669"/>
    <property type="project" value="TreeGrafter"/>
</dbReference>
<dbReference type="GO" id="GO:0006954">
    <property type="term" value="P:inflammatory response"/>
    <property type="evidence" value="ECO:0007669"/>
    <property type="project" value="InterPro"/>
</dbReference>
<dbReference type="GO" id="GO:0007204">
    <property type="term" value="P:positive regulation of cytosolic calcium ion concentration"/>
    <property type="evidence" value="ECO:0007669"/>
    <property type="project" value="TreeGrafter"/>
</dbReference>
<dbReference type="GO" id="GO:0009612">
    <property type="term" value="P:response to mechanical stimulus"/>
    <property type="evidence" value="ECO:0007669"/>
    <property type="project" value="InterPro"/>
</dbReference>
<dbReference type="FunFam" id="1.20.1070.10:FF:000295">
    <property type="entry name" value="B1 bradykinin receptor"/>
    <property type="match status" value="1"/>
</dbReference>
<dbReference type="Gene3D" id="1.20.1070.10">
    <property type="entry name" value="Rhodopsin 7-helix transmembrane proteins"/>
    <property type="match status" value="1"/>
</dbReference>
<dbReference type="InterPro" id="IPR001186">
    <property type="entry name" value="Brdyknn_1_rcpt"/>
</dbReference>
<dbReference type="InterPro" id="IPR000496">
    <property type="entry name" value="Brdyknn_rcpt"/>
</dbReference>
<dbReference type="InterPro" id="IPR050119">
    <property type="entry name" value="CCR1-9-like"/>
</dbReference>
<dbReference type="InterPro" id="IPR000276">
    <property type="entry name" value="GPCR_Rhodpsn"/>
</dbReference>
<dbReference type="InterPro" id="IPR017452">
    <property type="entry name" value="GPCR_Rhodpsn_7TM"/>
</dbReference>
<dbReference type="PANTHER" id="PTHR10489:SF957">
    <property type="entry name" value="B2 BRADYKININ RECEPTOR"/>
    <property type="match status" value="1"/>
</dbReference>
<dbReference type="PANTHER" id="PTHR10489">
    <property type="entry name" value="CELL ADHESION MOLECULE"/>
    <property type="match status" value="1"/>
</dbReference>
<dbReference type="Pfam" id="PF00001">
    <property type="entry name" value="7tm_1"/>
    <property type="match status" value="1"/>
</dbReference>
<dbReference type="PRINTS" id="PR00425">
    <property type="entry name" value="BRADYKININR"/>
</dbReference>
<dbReference type="PRINTS" id="PR00993">
    <property type="entry name" value="BRADYKINNB1R"/>
</dbReference>
<dbReference type="PRINTS" id="PR00237">
    <property type="entry name" value="GPCRRHODOPSN"/>
</dbReference>
<dbReference type="SUPFAM" id="SSF81321">
    <property type="entry name" value="Family A G protein-coupled receptor-like"/>
    <property type="match status" value="1"/>
</dbReference>
<dbReference type="PROSITE" id="PS50262">
    <property type="entry name" value="G_PROTEIN_RECEP_F1_2"/>
    <property type="match status" value="1"/>
</dbReference>
<name>BKRB1_MACFA</name>